<gene>
    <name type="primary">ths</name>
    <name type="ordered locus">PH0017</name>
</gene>
<name>THS_PYRHO</name>
<organism>
    <name type="scientific">Pyrococcus horikoshii (strain ATCC 700860 / DSM 12428 / JCM 9974 / NBRC 100139 / OT-3)</name>
    <dbReference type="NCBI Taxonomy" id="70601"/>
    <lineage>
        <taxon>Archaea</taxon>
        <taxon>Methanobacteriati</taxon>
        <taxon>Methanobacteriota</taxon>
        <taxon>Thermococci</taxon>
        <taxon>Thermococcales</taxon>
        <taxon>Thermococcaceae</taxon>
        <taxon>Pyrococcus</taxon>
    </lineage>
</organism>
<dbReference type="EMBL" id="BA000001">
    <property type="protein sequence ID" value="BAA29085.1"/>
    <property type="molecule type" value="Genomic_DNA"/>
</dbReference>
<dbReference type="PIR" id="F71219">
    <property type="entry name" value="F71219"/>
</dbReference>
<dbReference type="RefSeq" id="WP_010884137.1">
    <property type="nucleotide sequence ID" value="NC_000961.1"/>
</dbReference>
<dbReference type="SMR" id="O57762"/>
<dbReference type="DIP" id="DIP-29172N"/>
<dbReference type="IntAct" id="O57762">
    <property type="interactions" value="2"/>
</dbReference>
<dbReference type="MINT" id="O57762"/>
<dbReference type="STRING" id="70601.gene:9376924"/>
<dbReference type="EnsemblBacteria" id="BAA29085">
    <property type="protein sequence ID" value="BAA29085"/>
    <property type="gene ID" value="BAA29085"/>
</dbReference>
<dbReference type="GeneID" id="1443919"/>
<dbReference type="KEGG" id="pho:PH0017"/>
<dbReference type="eggNOG" id="arCOG01257">
    <property type="taxonomic scope" value="Archaea"/>
</dbReference>
<dbReference type="OrthoDB" id="9362at2157"/>
<dbReference type="BRENDA" id="3.6.4.B10">
    <property type="organism ID" value="5244"/>
</dbReference>
<dbReference type="Proteomes" id="UP000000752">
    <property type="component" value="Chromosome"/>
</dbReference>
<dbReference type="GO" id="GO:0005524">
    <property type="term" value="F:ATP binding"/>
    <property type="evidence" value="ECO:0007669"/>
    <property type="project" value="UniProtKB-KW"/>
</dbReference>
<dbReference type="GO" id="GO:0016887">
    <property type="term" value="F:ATP hydrolysis activity"/>
    <property type="evidence" value="ECO:0007669"/>
    <property type="project" value="InterPro"/>
</dbReference>
<dbReference type="GO" id="GO:0140662">
    <property type="term" value="F:ATP-dependent protein folding chaperone"/>
    <property type="evidence" value="ECO:0007669"/>
    <property type="project" value="InterPro"/>
</dbReference>
<dbReference type="GO" id="GO:0051082">
    <property type="term" value="F:unfolded protein binding"/>
    <property type="evidence" value="ECO:0007669"/>
    <property type="project" value="InterPro"/>
</dbReference>
<dbReference type="CDD" id="cd03343">
    <property type="entry name" value="cpn60"/>
    <property type="match status" value="1"/>
</dbReference>
<dbReference type="FunFam" id="1.10.560.10:FF:000017">
    <property type="entry name" value="T-complex protein 1 subunit eta"/>
    <property type="match status" value="1"/>
</dbReference>
<dbReference type="Gene3D" id="3.50.7.10">
    <property type="entry name" value="GroEL"/>
    <property type="match status" value="1"/>
</dbReference>
<dbReference type="Gene3D" id="1.10.560.10">
    <property type="entry name" value="GroEL-like equatorial domain"/>
    <property type="match status" value="1"/>
</dbReference>
<dbReference type="Gene3D" id="3.30.260.10">
    <property type="entry name" value="TCP-1-like chaperonin intermediate domain"/>
    <property type="match status" value="1"/>
</dbReference>
<dbReference type="InterPro" id="IPR017998">
    <property type="entry name" value="Chaperone_TCP-1"/>
</dbReference>
<dbReference type="InterPro" id="IPR002194">
    <property type="entry name" value="Chaperonin_TCP-1_CS"/>
</dbReference>
<dbReference type="InterPro" id="IPR002423">
    <property type="entry name" value="Cpn60/GroEL/TCP-1"/>
</dbReference>
<dbReference type="InterPro" id="IPR027409">
    <property type="entry name" value="GroEL-like_apical_dom_sf"/>
</dbReference>
<dbReference type="InterPro" id="IPR027413">
    <property type="entry name" value="GROEL-like_equatorial_sf"/>
</dbReference>
<dbReference type="InterPro" id="IPR027410">
    <property type="entry name" value="TCP-1-like_intermed_sf"/>
</dbReference>
<dbReference type="InterPro" id="IPR053374">
    <property type="entry name" value="TCP-1_chaperonin"/>
</dbReference>
<dbReference type="InterPro" id="IPR054827">
    <property type="entry name" value="thermosome_alpha"/>
</dbReference>
<dbReference type="InterPro" id="IPR012714">
    <property type="entry name" value="Thermosome_arc"/>
</dbReference>
<dbReference type="NCBIfam" id="NF041082">
    <property type="entry name" value="thermosome_alpha"/>
    <property type="match status" value="1"/>
</dbReference>
<dbReference type="NCBIfam" id="TIGR02339">
    <property type="entry name" value="thermosome_arch"/>
    <property type="match status" value="1"/>
</dbReference>
<dbReference type="NCBIfam" id="NF041083">
    <property type="entry name" value="thermosome_beta"/>
    <property type="match status" value="1"/>
</dbReference>
<dbReference type="PANTHER" id="PTHR11353">
    <property type="entry name" value="CHAPERONIN"/>
    <property type="match status" value="1"/>
</dbReference>
<dbReference type="Pfam" id="PF00118">
    <property type="entry name" value="Cpn60_TCP1"/>
    <property type="match status" value="1"/>
</dbReference>
<dbReference type="PRINTS" id="PR00304">
    <property type="entry name" value="TCOMPLEXTCP1"/>
</dbReference>
<dbReference type="SUPFAM" id="SSF52029">
    <property type="entry name" value="GroEL apical domain-like"/>
    <property type="match status" value="1"/>
</dbReference>
<dbReference type="SUPFAM" id="SSF48592">
    <property type="entry name" value="GroEL equatorial domain-like"/>
    <property type="match status" value="1"/>
</dbReference>
<dbReference type="SUPFAM" id="SSF54849">
    <property type="entry name" value="GroEL-intermediate domain like"/>
    <property type="match status" value="1"/>
</dbReference>
<dbReference type="PROSITE" id="PS00750">
    <property type="entry name" value="TCP1_1"/>
    <property type="match status" value="1"/>
</dbReference>
<dbReference type="PROSITE" id="PS00751">
    <property type="entry name" value="TCP1_2"/>
    <property type="match status" value="1"/>
</dbReference>
<dbReference type="PROSITE" id="PS00995">
    <property type="entry name" value="TCP1_3"/>
    <property type="match status" value="1"/>
</dbReference>
<sequence length="549" mass="59693">MAQLAGQPILILPEGTQRYVGRDAQRMNILAARIIAETVRTTLGPKGMDKMLVDSLGDIVITNDGATILDEMDIQHPAAKMMVEVAKTQDKEAGDGTTTAVVIAGELLKKAEELLDQNIHPSIIIKGYTLASQKAQEILDSIAKEVKPDDEEVLLKAAMTAITGKAAEEEREYLAKLAVEAVKLVAEEKDGKLKVDIDNIKLEKKEGGAVRDTRLIRGVVIDKEVVHPGMPKRIENAKIALINDALEVKETETDAEIRITSPEQLQAFLEQEEKMLKEMVDKIKEVGANVVFVQKGIDDLAQHYLAKYGILAVRRVKKSDMEKLAKATGAKIVTNIRDLTPEDLGEAELVEERKVAGENMIFVEGCKNPKAVTILIRGGTEHVVDEVERALEDAIKVVKDILEDGKIIAGGGASEIELSIKLDEYAKEVGGKEQLAIEAFAEALKVIPRTLAENAGLDPIETLVKVIAAHKEKGQTIGIDVYEGEPADMMERGVIEPVRVKKQAIKSASEAAIMILRIDDVIAASKLEKEKEGEKGGGSEEFSGSSDLD</sequence>
<proteinExistence type="inferred from homology"/>
<protein>
    <recommendedName>
        <fullName>Thermosome subunit</fullName>
    </recommendedName>
    <alternativeName>
        <fullName>Chaperonin subunit</fullName>
    </alternativeName>
</protein>
<reference key="1">
    <citation type="journal article" date="1998" name="DNA Res.">
        <title>Complete sequence and gene organization of the genome of a hyper-thermophilic archaebacterium, Pyrococcus horikoshii OT3.</title>
        <authorList>
            <person name="Kawarabayasi Y."/>
            <person name="Sawada M."/>
            <person name="Horikawa H."/>
            <person name="Haikawa Y."/>
            <person name="Hino Y."/>
            <person name="Yamamoto S."/>
            <person name="Sekine M."/>
            <person name="Baba S."/>
            <person name="Kosugi H."/>
            <person name="Hosoyama A."/>
            <person name="Nagai Y."/>
            <person name="Sakai M."/>
            <person name="Ogura K."/>
            <person name="Otsuka R."/>
            <person name="Nakazawa H."/>
            <person name="Takamiya M."/>
            <person name="Ohfuku Y."/>
            <person name="Funahashi T."/>
            <person name="Tanaka T."/>
            <person name="Kudoh Y."/>
            <person name="Yamazaki J."/>
            <person name="Kushida N."/>
            <person name="Oguchi A."/>
            <person name="Aoki K."/>
            <person name="Yoshizawa T."/>
            <person name="Nakamura Y."/>
            <person name="Robb F.T."/>
            <person name="Horikoshi K."/>
            <person name="Masuchi Y."/>
            <person name="Shizuya H."/>
            <person name="Kikuchi H."/>
        </authorList>
    </citation>
    <scope>NUCLEOTIDE SEQUENCE [LARGE SCALE GENOMIC DNA]</scope>
    <source>
        <strain>ATCC 700860 / DSM 12428 / JCM 9974 / NBRC 100139 / OT-3</strain>
    </source>
</reference>
<keyword id="KW-0067">ATP-binding</keyword>
<keyword id="KW-0143">Chaperone</keyword>
<keyword id="KW-0547">Nucleotide-binding</keyword>
<feature type="chain" id="PRO_0000128396" description="Thermosome subunit">
    <location>
        <begin position="1"/>
        <end position="549"/>
    </location>
</feature>
<feature type="region of interest" description="Disordered" evidence="2">
    <location>
        <begin position="528"/>
        <end position="549"/>
    </location>
</feature>
<feature type="compositionally biased region" description="Basic and acidic residues" evidence="2">
    <location>
        <begin position="528"/>
        <end position="538"/>
    </location>
</feature>
<feature type="compositionally biased region" description="Low complexity" evidence="2">
    <location>
        <begin position="540"/>
        <end position="549"/>
    </location>
</feature>
<evidence type="ECO:0000250" key="1"/>
<evidence type="ECO:0000256" key="2">
    <source>
        <dbReference type="SAM" id="MobiDB-lite"/>
    </source>
</evidence>
<evidence type="ECO:0000305" key="3"/>
<comment type="function">
    <text evidence="1">Molecular chaperone; binds unfolded polypeptides in vitro, and has a weak ATPase activity.</text>
</comment>
<comment type="subunit">
    <text evidence="1">Forms an oligomeric complex of eight-membered rings.</text>
</comment>
<comment type="similarity">
    <text evidence="3">Belongs to the TCP-1 chaperonin family.</text>
</comment>
<accession>O57762</accession>